<comment type="function">
    <text evidence="1">GTPase that plays an essential role in the late steps of ribosome biogenesis.</text>
</comment>
<comment type="subunit">
    <text evidence="1">Associates with the 50S ribosomal subunit.</text>
</comment>
<comment type="similarity">
    <text evidence="1">Belongs to the TRAFAC class TrmE-Era-EngA-EngB-Septin-like GTPase superfamily. EngA (Der) GTPase family.</text>
</comment>
<dbReference type="EMBL" id="AE015928">
    <property type="protein sequence ID" value="AAO78941.1"/>
    <property type="molecule type" value="Genomic_DNA"/>
</dbReference>
<dbReference type="RefSeq" id="NP_812747.1">
    <property type="nucleotide sequence ID" value="NC_004663.1"/>
</dbReference>
<dbReference type="RefSeq" id="WP_008760766.1">
    <property type="nucleotide sequence ID" value="NZ_UYXG01000011.1"/>
</dbReference>
<dbReference type="SMR" id="Q8A135"/>
<dbReference type="FunCoup" id="Q8A135">
    <property type="interactions" value="467"/>
</dbReference>
<dbReference type="STRING" id="226186.BT_3836"/>
<dbReference type="PaxDb" id="226186-BT_3836"/>
<dbReference type="EnsemblBacteria" id="AAO78941">
    <property type="protein sequence ID" value="AAO78941"/>
    <property type="gene ID" value="BT_3836"/>
</dbReference>
<dbReference type="GeneID" id="60925011"/>
<dbReference type="KEGG" id="bth:BT_3836"/>
<dbReference type="PATRIC" id="fig|226186.12.peg.3900"/>
<dbReference type="eggNOG" id="COG1160">
    <property type="taxonomic scope" value="Bacteria"/>
</dbReference>
<dbReference type="HOGENOM" id="CLU_016077_6_2_10"/>
<dbReference type="InParanoid" id="Q8A135"/>
<dbReference type="OrthoDB" id="9805918at2"/>
<dbReference type="Proteomes" id="UP000001414">
    <property type="component" value="Chromosome"/>
</dbReference>
<dbReference type="GO" id="GO:0005525">
    <property type="term" value="F:GTP binding"/>
    <property type="evidence" value="ECO:0007669"/>
    <property type="project" value="UniProtKB-UniRule"/>
</dbReference>
<dbReference type="GO" id="GO:0043022">
    <property type="term" value="F:ribosome binding"/>
    <property type="evidence" value="ECO:0000318"/>
    <property type="project" value="GO_Central"/>
</dbReference>
<dbReference type="GO" id="GO:0042254">
    <property type="term" value="P:ribosome biogenesis"/>
    <property type="evidence" value="ECO:0007669"/>
    <property type="project" value="UniProtKB-KW"/>
</dbReference>
<dbReference type="CDD" id="cd01894">
    <property type="entry name" value="EngA1"/>
    <property type="match status" value="1"/>
</dbReference>
<dbReference type="CDD" id="cd01895">
    <property type="entry name" value="EngA2"/>
    <property type="match status" value="1"/>
</dbReference>
<dbReference type="FunFam" id="3.30.300.20:FF:000004">
    <property type="entry name" value="GTPase Der"/>
    <property type="match status" value="1"/>
</dbReference>
<dbReference type="FunFam" id="3.40.50.300:FF:000040">
    <property type="entry name" value="GTPase Der"/>
    <property type="match status" value="1"/>
</dbReference>
<dbReference type="FunFam" id="3.40.50.300:FF:000953">
    <property type="entry name" value="GTPase Der"/>
    <property type="match status" value="1"/>
</dbReference>
<dbReference type="Gene3D" id="3.30.300.20">
    <property type="match status" value="1"/>
</dbReference>
<dbReference type="Gene3D" id="3.40.50.300">
    <property type="entry name" value="P-loop containing nucleotide triphosphate hydrolases"/>
    <property type="match status" value="2"/>
</dbReference>
<dbReference type="HAMAP" id="MF_00195">
    <property type="entry name" value="GTPase_Der"/>
    <property type="match status" value="1"/>
</dbReference>
<dbReference type="InterPro" id="IPR031166">
    <property type="entry name" value="G_ENGA"/>
</dbReference>
<dbReference type="InterPro" id="IPR006073">
    <property type="entry name" value="GTP-bd"/>
</dbReference>
<dbReference type="InterPro" id="IPR016484">
    <property type="entry name" value="GTPase_Der"/>
</dbReference>
<dbReference type="InterPro" id="IPR032859">
    <property type="entry name" value="KH_dom-like"/>
</dbReference>
<dbReference type="InterPro" id="IPR015946">
    <property type="entry name" value="KH_dom-like_a/b"/>
</dbReference>
<dbReference type="InterPro" id="IPR027417">
    <property type="entry name" value="P-loop_NTPase"/>
</dbReference>
<dbReference type="InterPro" id="IPR005225">
    <property type="entry name" value="Small_GTP-bd"/>
</dbReference>
<dbReference type="NCBIfam" id="TIGR03594">
    <property type="entry name" value="GTPase_EngA"/>
    <property type="match status" value="1"/>
</dbReference>
<dbReference type="NCBIfam" id="TIGR00231">
    <property type="entry name" value="small_GTP"/>
    <property type="match status" value="2"/>
</dbReference>
<dbReference type="PANTHER" id="PTHR43834">
    <property type="entry name" value="GTPASE DER"/>
    <property type="match status" value="1"/>
</dbReference>
<dbReference type="PANTHER" id="PTHR43834:SF6">
    <property type="entry name" value="GTPASE DER"/>
    <property type="match status" value="1"/>
</dbReference>
<dbReference type="Pfam" id="PF14714">
    <property type="entry name" value="KH_dom-like"/>
    <property type="match status" value="1"/>
</dbReference>
<dbReference type="Pfam" id="PF01926">
    <property type="entry name" value="MMR_HSR1"/>
    <property type="match status" value="2"/>
</dbReference>
<dbReference type="PIRSF" id="PIRSF006485">
    <property type="entry name" value="GTP-binding_EngA"/>
    <property type="match status" value="1"/>
</dbReference>
<dbReference type="PRINTS" id="PR00326">
    <property type="entry name" value="GTP1OBG"/>
</dbReference>
<dbReference type="SUPFAM" id="SSF52540">
    <property type="entry name" value="P-loop containing nucleoside triphosphate hydrolases"/>
    <property type="match status" value="2"/>
</dbReference>
<dbReference type="PROSITE" id="PS51712">
    <property type="entry name" value="G_ENGA"/>
    <property type="match status" value="2"/>
</dbReference>
<keyword id="KW-0342">GTP-binding</keyword>
<keyword id="KW-0547">Nucleotide-binding</keyword>
<keyword id="KW-1185">Reference proteome</keyword>
<keyword id="KW-0677">Repeat</keyword>
<keyword id="KW-0690">Ribosome biogenesis</keyword>
<organism>
    <name type="scientific">Bacteroides thetaiotaomicron (strain ATCC 29148 / DSM 2079 / JCM 5827 / CCUG 10774 / NCTC 10582 / VPI-5482 / E50)</name>
    <dbReference type="NCBI Taxonomy" id="226186"/>
    <lineage>
        <taxon>Bacteria</taxon>
        <taxon>Pseudomonadati</taxon>
        <taxon>Bacteroidota</taxon>
        <taxon>Bacteroidia</taxon>
        <taxon>Bacteroidales</taxon>
        <taxon>Bacteroidaceae</taxon>
        <taxon>Bacteroides</taxon>
    </lineage>
</organism>
<name>DER_BACTN</name>
<evidence type="ECO:0000255" key="1">
    <source>
        <dbReference type="HAMAP-Rule" id="MF_00195"/>
    </source>
</evidence>
<protein>
    <recommendedName>
        <fullName evidence="1">GTPase Der</fullName>
    </recommendedName>
    <alternativeName>
        <fullName evidence="1">GTP-binding protein EngA</fullName>
    </alternativeName>
</protein>
<proteinExistence type="inferred from homology"/>
<feature type="chain" id="PRO_0000178965" description="GTPase Der">
    <location>
        <begin position="1"/>
        <end position="437"/>
    </location>
</feature>
<feature type="domain" description="EngA-type G 1">
    <location>
        <begin position="3"/>
        <end position="167"/>
    </location>
</feature>
<feature type="domain" description="EngA-type G 2">
    <location>
        <begin position="176"/>
        <end position="352"/>
    </location>
</feature>
<feature type="domain" description="KH-like" evidence="1">
    <location>
        <begin position="353"/>
        <end position="437"/>
    </location>
</feature>
<feature type="binding site" evidence="1">
    <location>
        <begin position="9"/>
        <end position="16"/>
    </location>
    <ligand>
        <name>GTP</name>
        <dbReference type="ChEBI" id="CHEBI:37565"/>
        <label>1</label>
    </ligand>
</feature>
<feature type="binding site" evidence="1">
    <location>
        <begin position="56"/>
        <end position="60"/>
    </location>
    <ligand>
        <name>GTP</name>
        <dbReference type="ChEBI" id="CHEBI:37565"/>
        <label>1</label>
    </ligand>
</feature>
<feature type="binding site" evidence="1">
    <location>
        <begin position="119"/>
        <end position="122"/>
    </location>
    <ligand>
        <name>GTP</name>
        <dbReference type="ChEBI" id="CHEBI:37565"/>
        <label>1</label>
    </ligand>
</feature>
<feature type="binding site" evidence="1">
    <location>
        <begin position="182"/>
        <end position="189"/>
    </location>
    <ligand>
        <name>GTP</name>
        <dbReference type="ChEBI" id="CHEBI:37565"/>
        <label>2</label>
    </ligand>
</feature>
<feature type="binding site" evidence="1">
    <location>
        <begin position="229"/>
        <end position="233"/>
    </location>
    <ligand>
        <name>GTP</name>
        <dbReference type="ChEBI" id="CHEBI:37565"/>
        <label>2</label>
    </ligand>
</feature>
<feature type="binding site" evidence="1">
    <location>
        <begin position="294"/>
        <end position="297"/>
    </location>
    <ligand>
        <name>GTP</name>
        <dbReference type="ChEBI" id="CHEBI:37565"/>
        <label>2</label>
    </ligand>
</feature>
<reference key="1">
    <citation type="journal article" date="2003" name="Science">
        <title>A genomic view of the human-Bacteroides thetaiotaomicron symbiosis.</title>
        <authorList>
            <person name="Xu J."/>
            <person name="Bjursell M.K."/>
            <person name="Himrod J."/>
            <person name="Deng S."/>
            <person name="Carmichael L.K."/>
            <person name="Chiang H.C."/>
            <person name="Hooper L.V."/>
            <person name="Gordon J.I."/>
        </authorList>
    </citation>
    <scope>NUCLEOTIDE SEQUENCE [LARGE SCALE GENOMIC DNA]</scope>
    <source>
        <strain>ATCC 29148 / DSM 2079 / JCM 5827 / CCUG 10774 / NCTC 10582 / VPI-5482 / E50</strain>
    </source>
</reference>
<sequence>MNNLVAIVGRPNVGKSTLFNRLTKTRQAIVNEEAGTTRDRQYGKSEWLGREFSVVDTGGWVVNSDDIFEEEIRKQVLLAVEEADVILFVVDVMNGVTDLDMQVATILRRANSPVIMVANKTDNNELQYNAPEFYKLGLGDPYCISAITGSGTGDLMDLIVSKFNKETSEILDDDIPRFAVVGRPNAGKSSIVNAFIGEDRNIVTEIAGTTRDSIYTRYNKFGFDFYLVDTAGIRKKNKVNEDLEYYSVVRSIRSIENADVCILMLDATRGVESQDLNILSLIQKNQKGLVVVINKWDLIEDKTAKMMKEFEATIRSRFAPFVDFPIIFASALTKQRILKVLEEARNVYENRTTKIPTARLNEEMLPLIEAYPPPSNKGKYIKIKYITQLPNTQVPSFVYFANLPQYVKEPYKRFLENKMREKWNLTGTPINIYIRQK</sequence>
<gene>
    <name evidence="1" type="primary">der</name>
    <name type="synonym">engA</name>
    <name type="ordered locus">BT_3836</name>
</gene>
<accession>Q8A135</accession>